<comment type="function">
    <text evidence="2 6">Interacts with MAPK kinases and regulates activation of MAP kinases. Does not display kinase activity.</text>
</comment>
<comment type="subcellular location">
    <subcellularLocation>
        <location evidence="6">Cytoplasm</location>
    </subcellularLocation>
    <subcellularLocation>
        <location evidence="8">Cytoplasm</location>
        <location evidence="8">Cytoskeleton</location>
    </subcellularLocation>
    <text>May associate with the cytoskeleton.</text>
</comment>
<comment type="tissue specificity">
    <text evidence="5">Highly expressed in the thyroid, also present in ovary and cerebrum.</text>
</comment>
<comment type="domain">
    <text>The protein kinase domain is predicted to be catalytically inactive.</text>
</comment>
<comment type="similarity">
    <text evidence="7">Belongs to the protein kinase superfamily. CAMK Ser/Thr protein kinase family. Tribbles subfamily.</text>
</comment>
<sequence length="343" mass="38787">MNIHRSTPITIARYGRSRNKTQDFEELSSIRSAEPSQSFSPNLGSPSPPETPNLSHCVSCIGKYLLLEPLEGDHVFRAVHLHSGEELVCKVFDISCYQESLAPCFCLSAHSNINQITEIILGETKAYVFFERSYGDMHSFVRTCKKLREEEAARLFYQIASAVAHCHDGGLVLRDLKLRKFIFKDEERTRVKLESLEDAYILRGDDDSLSDKHGCPAYVSPEILNTSGSYSGKAADVWSLGVMLYTMLVGRYPFHDIEPSSLFSKIRRGQFNIPETLSPKAKCLIRSILRREPSERLTSQEILDHPWFSTDFSVSNSGYGAKEVSDQLVPDVNMEENLDPFFN</sequence>
<evidence type="ECO:0000250" key="1">
    <source>
        <dbReference type="UniProtKB" id="Q96RU7"/>
    </source>
</evidence>
<evidence type="ECO:0000250" key="2">
    <source>
        <dbReference type="UniProtKB" id="Q96RU8"/>
    </source>
</evidence>
<evidence type="ECO:0000255" key="3">
    <source>
        <dbReference type="PROSITE-ProRule" id="PRU00159"/>
    </source>
</evidence>
<evidence type="ECO:0000256" key="4">
    <source>
        <dbReference type="SAM" id="MobiDB-lite"/>
    </source>
</evidence>
<evidence type="ECO:0000269" key="5">
    <source>
    </source>
</evidence>
<evidence type="ECO:0000269" key="6">
    <source>
    </source>
</evidence>
<evidence type="ECO:0000305" key="7"/>
<evidence type="ECO:0000305" key="8">
    <source>
    </source>
</evidence>
<evidence type="ECO:0000312" key="9">
    <source>
        <dbReference type="EMBL" id="CAA67581.1"/>
    </source>
</evidence>
<reference evidence="7 9" key="1">
    <citation type="journal article" date="1996" name="J. Biol. Chem.">
        <title>Identification and characterization of novel genes modulated in the thyroid of dogs treated with methimazole and propylthiouracil.</title>
        <authorList>
            <person name="Wilkin F."/>
            <person name="Savonet V."/>
            <person name="Radulescu A."/>
            <person name="Petermans J."/>
            <person name="Dumont J.E."/>
            <person name="Maenhaut C."/>
        </authorList>
    </citation>
    <scope>NUCLEOTIDE SEQUENCE [MRNA]</scope>
    <scope>TISSUE SPECIFICITY</scope>
    <source>
        <tissue evidence="9">Thyroid</tissue>
    </source>
</reference>
<reference evidence="7 9" key="2">
    <citation type="journal article" date="1997" name="Eur. J. Biochem.">
        <title>Characterization of a phosphoprotein whose mRNA is regulated by the mitogenic pathways in dog thyroid cells.</title>
        <authorList>
            <person name="Wilkin F."/>
            <person name="Suarez-Huerta N."/>
            <person name="Robaye B."/>
            <person name="Peetermans J."/>
            <person name="Libert F."/>
            <person name="Dumont J.E."/>
            <person name="Maenhaut C."/>
        </authorList>
    </citation>
    <scope>NUCLEOTIDE SEQUENCE [MRNA]</scope>
    <scope>FUNCTION</scope>
    <scope>SUBCELLULAR LOCATION</scope>
    <source>
        <tissue evidence="9">Thyroid</tissue>
    </source>
</reference>
<dbReference type="EMBL" id="X99144">
    <property type="protein sequence ID" value="CAA67581.1"/>
    <property type="molecule type" value="mRNA"/>
</dbReference>
<dbReference type="RefSeq" id="NP_001003218.1">
    <property type="nucleotide sequence ID" value="NM_001003218.1"/>
</dbReference>
<dbReference type="RefSeq" id="XP_005630124.1">
    <property type="nucleotide sequence ID" value="XM_005630067.2"/>
</dbReference>
<dbReference type="RefSeq" id="XP_005630125.1">
    <property type="nucleotide sequence ID" value="XM_005630068.2"/>
</dbReference>
<dbReference type="RefSeq" id="XP_038546365.1">
    <property type="nucleotide sequence ID" value="XM_038690437.1"/>
</dbReference>
<dbReference type="RefSeq" id="XP_038546366.1">
    <property type="nucleotide sequence ID" value="XM_038690438.1"/>
</dbReference>
<dbReference type="SMR" id="Q28283"/>
<dbReference type="FunCoup" id="Q28283">
    <property type="interactions" value="551"/>
</dbReference>
<dbReference type="STRING" id="9615.ENSCAFP00000043023"/>
<dbReference type="PaxDb" id="9612-ENSCAFP00000043023"/>
<dbReference type="Ensembl" id="ENSCAFT00000049200.3">
    <property type="protein sequence ID" value="ENSCAFP00000043023.2"/>
    <property type="gene ID" value="ENSCAFG00000029053.3"/>
</dbReference>
<dbReference type="Ensembl" id="ENSCAFT00030016960.1">
    <property type="protein sequence ID" value="ENSCAFP00030014821.1"/>
    <property type="gene ID" value="ENSCAFG00030009154.1"/>
</dbReference>
<dbReference type="Ensembl" id="ENSCAFT00040018623.1">
    <property type="protein sequence ID" value="ENSCAFP00040016155.1"/>
    <property type="gene ID" value="ENSCAFG00040010048.1"/>
</dbReference>
<dbReference type="Ensembl" id="ENSCAFT00845051570.1">
    <property type="protein sequence ID" value="ENSCAFP00845040463.1"/>
    <property type="gene ID" value="ENSCAFG00845029138.1"/>
</dbReference>
<dbReference type="GeneID" id="403884"/>
<dbReference type="KEGG" id="cfa:403884"/>
<dbReference type="CTD" id="28951"/>
<dbReference type="VEuPathDB" id="HostDB:ENSCAFG00845029138"/>
<dbReference type="VGNC" id="VGNC:47801">
    <property type="gene designation" value="TRIB2"/>
</dbReference>
<dbReference type="eggNOG" id="KOG0583">
    <property type="taxonomic scope" value="Eukaryota"/>
</dbReference>
<dbReference type="GeneTree" id="ENSGT00950000182986"/>
<dbReference type="InParanoid" id="Q28283"/>
<dbReference type="OrthoDB" id="410920at2759"/>
<dbReference type="Proteomes" id="UP000002254">
    <property type="component" value="Chromosome 17"/>
</dbReference>
<dbReference type="Proteomes" id="UP000694429">
    <property type="component" value="Chromosome 17"/>
</dbReference>
<dbReference type="Proteomes" id="UP000694542">
    <property type="component" value="Chromosome 17"/>
</dbReference>
<dbReference type="Proteomes" id="UP000805418">
    <property type="component" value="Chromosome 17"/>
</dbReference>
<dbReference type="Bgee" id="ENSCAFG00000029053">
    <property type="expression patterns" value="Expressed in ovary and 48 other cell types or tissues"/>
</dbReference>
<dbReference type="GO" id="GO:0005737">
    <property type="term" value="C:cytoplasm"/>
    <property type="evidence" value="ECO:0000314"/>
    <property type="project" value="UniProtKB"/>
</dbReference>
<dbReference type="GO" id="GO:0005856">
    <property type="term" value="C:cytoskeleton"/>
    <property type="evidence" value="ECO:0007669"/>
    <property type="project" value="UniProtKB-SubCell"/>
</dbReference>
<dbReference type="GO" id="GO:0005634">
    <property type="term" value="C:nucleus"/>
    <property type="evidence" value="ECO:0000318"/>
    <property type="project" value="GO_Central"/>
</dbReference>
<dbReference type="GO" id="GO:0031434">
    <property type="term" value="F:mitogen-activated protein kinase kinase binding"/>
    <property type="evidence" value="ECO:0000318"/>
    <property type="project" value="GO_Central"/>
</dbReference>
<dbReference type="GO" id="GO:0004860">
    <property type="term" value="F:protein kinase inhibitor activity"/>
    <property type="evidence" value="ECO:0007669"/>
    <property type="project" value="UniProtKB-KW"/>
</dbReference>
<dbReference type="GO" id="GO:0061629">
    <property type="term" value="F:RNA polymerase II-specific DNA-binding transcription factor binding"/>
    <property type="evidence" value="ECO:0007669"/>
    <property type="project" value="Ensembl"/>
</dbReference>
<dbReference type="GO" id="GO:0031625">
    <property type="term" value="F:ubiquitin protein ligase binding"/>
    <property type="evidence" value="ECO:0007669"/>
    <property type="project" value="Ensembl"/>
</dbReference>
<dbReference type="GO" id="GO:0055106">
    <property type="term" value="F:ubiquitin-protein transferase regulator activity"/>
    <property type="evidence" value="ECO:0007669"/>
    <property type="project" value="Ensembl"/>
</dbReference>
<dbReference type="GO" id="GO:0045599">
    <property type="term" value="P:negative regulation of fat cell differentiation"/>
    <property type="evidence" value="ECO:0007669"/>
    <property type="project" value="Ensembl"/>
</dbReference>
<dbReference type="GO" id="GO:0032693">
    <property type="term" value="P:negative regulation of interleukin-10 production"/>
    <property type="evidence" value="ECO:0007669"/>
    <property type="project" value="Ensembl"/>
</dbReference>
<dbReference type="GO" id="GO:0032436">
    <property type="term" value="P:positive regulation of proteasomal ubiquitin-dependent protein catabolic process"/>
    <property type="evidence" value="ECO:0000318"/>
    <property type="project" value="GO_Central"/>
</dbReference>
<dbReference type="GO" id="GO:0043405">
    <property type="term" value="P:regulation of MAP kinase activity"/>
    <property type="evidence" value="ECO:0000250"/>
    <property type="project" value="UniProtKB"/>
</dbReference>
<dbReference type="CDD" id="cd14022">
    <property type="entry name" value="PK_TRB2"/>
    <property type="match status" value="1"/>
</dbReference>
<dbReference type="FunFam" id="1.10.510.10:FF:000153">
    <property type="entry name" value="Tribbles homolog 2"/>
    <property type="match status" value="1"/>
</dbReference>
<dbReference type="FunFam" id="3.30.200.20:FF:000253">
    <property type="entry name" value="tribbles homolog 2"/>
    <property type="match status" value="1"/>
</dbReference>
<dbReference type="Gene3D" id="3.30.200.20">
    <property type="entry name" value="Phosphorylase Kinase, domain 1"/>
    <property type="match status" value="1"/>
</dbReference>
<dbReference type="Gene3D" id="1.10.510.10">
    <property type="entry name" value="Transferase(Phosphotransferase) domain 1"/>
    <property type="match status" value="1"/>
</dbReference>
<dbReference type="InterPro" id="IPR011009">
    <property type="entry name" value="Kinase-like_dom_sf"/>
</dbReference>
<dbReference type="InterPro" id="IPR000719">
    <property type="entry name" value="Prot_kinase_dom"/>
</dbReference>
<dbReference type="InterPro" id="IPR024104">
    <property type="entry name" value="Tribbles/Ser_Thr_kinase_40"/>
</dbReference>
<dbReference type="PANTHER" id="PTHR22961">
    <property type="entry name" value="SER/THR PROTEIN KINASE-TRB"/>
    <property type="match status" value="1"/>
</dbReference>
<dbReference type="PANTHER" id="PTHR22961:SF15">
    <property type="entry name" value="TRIBBLES HOMOLOG 2"/>
    <property type="match status" value="1"/>
</dbReference>
<dbReference type="Pfam" id="PF00069">
    <property type="entry name" value="Pkinase"/>
    <property type="match status" value="1"/>
</dbReference>
<dbReference type="SUPFAM" id="SSF56112">
    <property type="entry name" value="Protein kinase-like (PK-like)"/>
    <property type="match status" value="1"/>
</dbReference>
<dbReference type="PROSITE" id="PS50011">
    <property type="entry name" value="PROTEIN_KINASE_DOM"/>
    <property type="match status" value="1"/>
</dbReference>
<accession>Q28283</accession>
<keyword id="KW-0963">Cytoplasm</keyword>
<keyword id="KW-0206">Cytoskeleton</keyword>
<keyword id="KW-0649">Protein kinase inhibitor</keyword>
<keyword id="KW-1185">Reference proteome</keyword>
<feature type="chain" id="PRO_0000131862" description="Tribbles homolog 2">
    <location>
        <begin position="1"/>
        <end position="343"/>
    </location>
</feature>
<feature type="domain" description="Protein kinase" evidence="3">
    <location>
        <begin position="61"/>
        <end position="308"/>
    </location>
</feature>
<feature type="region of interest" description="Disordered" evidence="4">
    <location>
        <begin position="25"/>
        <end position="50"/>
    </location>
</feature>
<feature type="compositionally biased region" description="Polar residues" evidence="4">
    <location>
        <begin position="29"/>
        <end position="45"/>
    </location>
</feature>
<gene>
    <name evidence="1" type="primary">TRIB2</name>
    <name evidence="9" type="synonym">C5FW</name>
</gene>
<proteinExistence type="evidence at transcript level"/>
<name>TRIB2_CANLF</name>
<protein>
    <recommendedName>
        <fullName>Tribbles homolog 2</fullName>
        <shortName>TRB-2</shortName>
    </recommendedName>
</protein>
<organism>
    <name type="scientific">Canis lupus familiaris</name>
    <name type="common">Dog</name>
    <name type="synonym">Canis familiaris</name>
    <dbReference type="NCBI Taxonomy" id="9615"/>
    <lineage>
        <taxon>Eukaryota</taxon>
        <taxon>Metazoa</taxon>
        <taxon>Chordata</taxon>
        <taxon>Craniata</taxon>
        <taxon>Vertebrata</taxon>
        <taxon>Euteleostomi</taxon>
        <taxon>Mammalia</taxon>
        <taxon>Eutheria</taxon>
        <taxon>Laurasiatheria</taxon>
        <taxon>Carnivora</taxon>
        <taxon>Caniformia</taxon>
        <taxon>Canidae</taxon>
        <taxon>Canis</taxon>
    </lineage>
</organism>